<proteinExistence type="inferred from homology"/>
<reference key="1">
    <citation type="journal article" date="2008" name="Genome Res.">
        <title>Comparative genome analysis of Salmonella enteritidis PT4 and Salmonella gallinarum 287/91 provides insights into evolutionary and host adaptation pathways.</title>
        <authorList>
            <person name="Thomson N.R."/>
            <person name="Clayton D.J."/>
            <person name="Windhorst D."/>
            <person name="Vernikos G."/>
            <person name="Davidson S."/>
            <person name="Churcher C."/>
            <person name="Quail M.A."/>
            <person name="Stevens M."/>
            <person name="Jones M.A."/>
            <person name="Watson M."/>
            <person name="Barron A."/>
            <person name="Layton A."/>
            <person name="Pickard D."/>
            <person name="Kingsley R.A."/>
            <person name="Bignell A."/>
            <person name="Clark L."/>
            <person name="Harris B."/>
            <person name="Ormond D."/>
            <person name="Abdellah Z."/>
            <person name="Brooks K."/>
            <person name="Cherevach I."/>
            <person name="Chillingworth T."/>
            <person name="Woodward J."/>
            <person name="Norberczak H."/>
            <person name="Lord A."/>
            <person name="Arrowsmith C."/>
            <person name="Jagels K."/>
            <person name="Moule S."/>
            <person name="Mungall K."/>
            <person name="Saunders M."/>
            <person name="Whitehead S."/>
            <person name="Chabalgoity J.A."/>
            <person name="Maskell D."/>
            <person name="Humphreys T."/>
            <person name="Roberts M."/>
            <person name="Barrow P.A."/>
            <person name="Dougan G."/>
            <person name="Parkhill J."/>
        </authorList>
    </citation>
    <scope>NUCLEOTIDE SEQUENCE [LARGE SCALE GENOMIC DNA]</scope>
    <source>
        <strain>P125109</strain>
    </source>
</reference>
<accession>B5QVH1</accession>
<evidence type="ECO:0000255" key="1">
    <source>
        <dbReference type="HAMAP-Rule" id="MF_01550"/>
    </source>
</evidence>
<dbReference type="EC" id="3.6.1.40" evidence="1"/>
<dbReference type="EMBL" id="AM933172">
    <property type="protein sequence ID" value="CAR35294.1"/>
    <property type="molecule type" value="Genomic_DNA"/>
</dbReference>
<dbReference type="RefSeq" id="WP_001089447.1">
    <property type="nucleotide sequence ID" value="NC_011294.1"/>
</dbReference>
<dbReference type="SMR" id="B5QVH1"/>
<dbReference type="KEGG" id="set:SEN3719"/>
<dbReference type="HOGENOM" id="CLU_025908_4_0_6"/>
<dbReference type="UniPathway" id="UPA00908">
    <property type="reaction ID" value="UER00885"/>
</dbReference>
<dbReference type="Proteomes" id="UP000000613">
    <property type="component" value="Chromosome"/>
</dbReference>
<dbReference type="GO" id="GO:0008894">
    <property type="term" value="F:guanosine-5'-triphosphate,3'-diphosphate diphosphatase activity"/>
    <property type="evidence" value="ECO:0007669"/>
    <property type="project" value="UniProtKB-UniRule"/>
</dbReference>
<dbReference type="GO" id="GO:0015974">
    <property type="term" value="P:guanosine pentaphosphate catabolic process"/>
    <property type="evidence" value="ECO:0007669"/>
    <property type="project" value="InterPro"/>
</dbReference>
<dbReference type="GO" id="GO:0015970">
    <property type="term" value="P:guanosine tetraphosphate biosynthetic process"/>
    <property type="evidence" value="ECO:0007669"/>
    <property type="project" value="UniProtKB-UniRule"/>
</dbReference>
<dbReference type="GO" id="GO:0015949">
    <property type="term" value="P:nucleobase-containing small molecule interconversion"/>
    <property type="evidence" value="ECO:0007669"/>
    <property type="project" value="TreeGrafter"/>
</dbReference>
<dbReference type="CDD" id="cd24117">
    <property type="entry name" value="ASKHA_NBD_EcGppA-like"/>
    <property type="match status" value="1"/>
</dbReference>
<dbReference type="FunFam" id="1.10.3210.10:FF:000004">
    <property type="entry name" value="Guanosine-5'-triphosphate,3'-diphosphate pyrophosphatase"/>
    <property type="match status" value="1"/>
</dbReference>
<dbReference type="FunFam" id="3.30.420.150:FF:000001">
    <property type="entry name" value="Guanosine-5'-triphosphate,3'-diphosphate pyrophosphatase"/>
    <property type="match status" value="1"/>
</dbReference>
<dbReference type="FunFam" id="3.30.420.40:FF:000023">
    <property type="entry name" value="Guanosine-5'-triphosphate,3'-diphosphate pyrophosphatase"/>
    <property type="match status" value="1"/>
</dbReference>
<dbReference type="Gene3D" id="3.30.420.40">
    <property type="match status" value="1"/>
</dbReference>
<dbReference type="Gene3D" id="3.30.420.150">
    <property type="entry name" value="Exopolyphosphatase. Domain 2"/>
    <property type="match status" value="1"/>
</dbReference>
<dbReference type="Gene3D" id="1.10.3210.10">
    <property type="entry name" value="Hypothetical protein af1432"/>
    <property type="match status" value="1"/>
</dbReference>
<dbReference type="HAMAP" id="MF_01550">
    <property type="entry name" value="GppA"/>
    <property type="match status" value="1"/>
</dbReference>
<dbReference type="InterPro" id="IPR043129">
    <property type="entry name" value="ATPase_NBD"/>
</dbReference>
<dbReference type="InterPro" id="IPR050273">
    <property type="entry name" value="GppA/Ppx_hydrolase"/>
</dbReference>
<dbReference type="InterPro" id="IPR023709">
    <property type="entry name" value="Guo-5TP_3DP_PyrP"/>
</dbReference>
<dbReference type="InterPro" id="IPR048950">
    <property type="entry name" value="Ppx_GppA_C"/>
</dbReference>
<dbReference type="InterPro" id="IPR003695">
    <property type="entry name" value="Ppx_GppA_N"/>
</dbReference>
<dbReference type="InterPro" id="IPR030673">
    <property type="entry name" value="PyroPPase_GppA_Ppx"/>
</dbReference>
<dbReference type="NCBIfam" id="NF008260">
    <property type="entry name" value="PRK11031.1"/>
    <property type="match status" value="1"/>
</dbReference>
<dbReference type="PANTHER" id="PTHR30005">
    <property type="entry name" value="EXOPOLYPHOSPHATASE"/>
    <property type="match status" value="1"/>
</dbReference>
<dbReference type="PANTHER" id="PTHR30005:SF0">
    <property type="entry name" value="RETROGRADE REGULATION PROTEIN 2"/>
    <property type="match status" value="1"/>
</dbReference>
<dbReference type="Pfam" id="PF02541">
    <property type="entry name" value="Ppx-GppA"/>
    <property type="match status" value="1"/>
</dbReference>
<dbReference type="Pfam" id="PF21447">
    <property type="entry name" value="Ppx-GppA_III"/>
    <property type="match status" value="1"/>
</dbReference>
<dbReference type="PIRSF" id="PIRSF001267">
    <property type="entry name" value="Pyrophosphatase_GppA_Ppx"/>
    <property type="match status" value="1"/>
</dbReference>
<dbReference type="SUPFAM" id="SSF53067">
    <property type="entry name" value="Actin-like ATPase domain"/>
    <property type="match status" value="2"/>
</dbReference>
<dbReference type="SUPFAM" id="SSF109604">
    <property type="entry name" value="HD-domain/PDEase-like"/>
    <property type="match status" value="1"/>
</dbReference>
<protein>
    <recommendedName>
        <fullName evidence="1">Guanosine-5'-triphosphate,3'-diphosphate pyrophosphatase</fullName>
        <ecNumber evidence="1">3.6.1.40</ecNumber>
    </recommendedName>
    <alternativeName>
        <fullName evidence="1">Guanosine pentaphosphate phosphohydrolase</fullName>
    </alternativeName>
    <alternativeName>
        <fullName evidence="1">pppGpp-5'-phosphohydrolase</fullName>
    </alternativeName>
</protein>
<organism>
    <name type="scientific">Salmonella enteritidis PT4 (strain P125109)</name>
    <dbReference type="NCBI Taxonomy" id="550537"/>
    <lineage>
        <taxon>Bacteria</taxon>
        <taxon>Pseudomonadati</taxon>
        <taxon>Pseudomonadota</taxon>
        <taxon>Gammaproteobacteria</taxon>
        <taxon>Enterobacterales</taxon>
        <taxon>Enterobacteriaceae</taxon>
        <taxon>Salmonella</taxon>
    </lineage>
</organism>
<comment type="function">
    <text evidence="1">Catalyzes the conversion of pppGpp to ppGpp. Guanosine pentaphosphate (pppGpp) is a cytoplasmic signaling molecule which together with ppGpp controls the 'stringent response', an adaptive process that allows bacteria to respond to amino acid starvation, resulting in the coordinated regulation of numerous cellular activities.</text>
</comment>
<comment type="catalytic activity">
    <reaction evidence="1">
        <text>guanosine 3'-diphosphate 5'-triphosphate + H2O = guanosine 3',5'-bis(diphosphate) + phosphate + H(+)</text>
        <dbReference type="Rhea" id="RHEA:13073"/>
        <dbReference type="ChEBI" id="CHEBI:15377"/>
        <dbReference type="ChEBI" id="CHEBI:15378"/>
        <dbReference type="ChEBI" id="CHEBI:43474"/>
        <dbReference type="ChEBI" id="CHEBI:77828"/>
        <dbReference type="ChEBI" id="CHEBI:142410"/>
        <dbReference type="EC" id="3.6.1.40"/>
    </reaction>
</comment>
<comment type="pathway">
    <text evidence="1">Purine metabolism; ppGpp biosynthesis; ppGpp from GTP: step 2/2.</text>
</comment>
<comment type="similarity">
    <text evidence="1">Belongs to the GppA/Ppx family. GppA subfamily.</text>
</comment>
<sequence>MNSTSLYAAIDLGSNSFHMLVVREAAGSIQTLTRIKRKVRLAAGLNNDNHLSAEAMERGWQCLRLFAERLQDIPQPQIRVVATATLRLAVNAGEFIAKAQTILGCPVQVISGEEEARLIYQGVAHTTGGADQRLVVDIGGASTELVTGTGAQTTSLFSLSMGCVTWLERYFSDRNLAQENFDDAEKAARDVLRPVADELRFHGWKVCVGASGTVQALQEIMMAQGMDERITLAKLQQLKQRAIQCGRLEELEIEGLTLERALVFPSGLAILIAIFTELNIQSMTLAGGALREGLVYGMLHLAVDQDIRSRTLRNIQRRFIVDTDQANRVAKLADNFLKQVENAWHIEPISRELLLSACQLHEIGLSVDFKQAPYHAAYLVRHLDLPGYTPAQKKLLATLLLNQTNPVDLSSLHQQNAVPPRVAEQLCRLLRLAILFAGRRRDDLVPEITLQALNENLTLTLPGDWLAHHPLGKELIDQESQWQSYVHWPLDVR</sequence>
<gene>
    <name evidence="1" type="primary">gppA</name>
    <name type="ordered locus">SEN3719</name>
</gene>
<feature type="chain" id="PRO_1000192534" description="Guanosine-5'-triphosphate,3'-diphosphate pyrophosphatase">
    <location>
        <begin position="1"/>
        <end position="493"/>
    </location>
</feature>
<keyword id="KW-0378">Hydrolase</keyword>
<name>GPPA_SALEP</name>